<organism>
    <name type="scientific">Bacillus cereus (strain AH820)</name>
    <dbReference type="NCBI Taxonomy" id="405535"/>
    <lineage>
        <taxon>Bacteria</taxon>
        <taxon>Bacillati</taxon>
        <taxon>Bacillota</taxon>
        <taxon>Bacilli</taxon>
        <taxon>Bacillales</taxon>
        <taxon>Bacillaceae</taxon>
        <taxon>Bacillus</taxon>
        <taxon>Bacillus cereus group</taxon>
    </lineage>
</organism>
<keyword id="KW-0560">Oxidoreductase</keyword>
<keyword id="KW-0663">Pyridoxal phosphate</keyword>
<dbReference type="EC" id="1.4.4.2" evidence="1"/>
<dbReference type="EMBL" id="CP001283">
    <property type="protein sequence ID" value="ACK91432.1"/>
    <property type="molecule type" value="Genomic_DNA"/>
</dbReference>
<dbReference type="RefSeq" id="WP_000795698.1">
    <property type="nucleotide sequence ID" value="NC_011773.1"/>
</dbReference>
<dbReference type="SMR" id="B7JMU9"/>
<dbReference type="GeneID" id="93006875"/>
<dbReference type="KEGG" id="bcu:BCAH820_4245"/>
<dbReference type="HOGENOM" id="CLU_004620_5_0_9"/>
<dbReference type="Proteomes" id="UP000001363">
    <property type="component" value="Chromosome"/>
</dbReference>
<dbReference type="GO" id="GO:0005829">
    <property type="term" value="C:cytosol"/>
    <property type="evidence" value="ECO:0007669"/>
    <property type="project" value="TreeGrafter"/>
</dbReference>
<dbReference type="GO" id="GO:0005960">
    <property type="term" value="C:glycine cleavage complex"/>
    <property type="evidence" value="ECO:0007669"/>
    <property type="project" value="TreeGrafter"/>
</dbReference>
<dbReference type="GO" id="GO:0016594">
    <property type="term" value="F:glycine binding"/>
    <property type="evidence" value="ECO:0007669"/>
    <property type="project" value="TreeGrafter"/>
</dbReference>
<dbReference type="GO" id="GO:0004375">
    <property type="term" value="F:glycine dehydrogenase (decarboxylating) activity"/>
    <property type="evidence" value="ECO:0007669"/>
    <property type="project" value="UniProtKB-EC"/>
</dbReference>
<dbReference type="GO" id="GO:0030170">
    <property type="term" value="F:pyridoxal phosphate binding"/>
    <property type="evidence" value="ECO:0007669"/>
    <property type="project" value="TreeGrafter"/>
</dbReference>
<dbReference type="GO" id="GO:0019464">
    <property type="term" value="P:glycine decarboxylation via glycine cleavage system"/>
    <property type="evidence" value="ECO:0007669"/>
    <property type="project" value="UniProtKB-UniRule"/>
</dbReference>
<dbReference type="CDD" id="cd00613">
    <property type="entry name" value="GDC-P"/>
    <property type="match status" value="1"/>
</dbReference>
<dbReference type="FunFam" id="3.40.640.10:FF:000034">
    <property type="entry name" value="Probable glycine dehydrogenase (decarboxylating) subunit 2"/>
    <property type="match status" value="1"/>
</dbReference>
<dbReference type="FunFam" id="3.90.1150.10:FF:000014">
    <property type="entry name" value="Probable glycine dehydrogenase (decarboxylating) subunit 2"/>
    <property type="match status" value="1"/>
</dbReference>
<dbReference type="Gene3D" id="6.20.440.10">
    <property type="match status" value="1"/>
</dbReference>
<dbReference type="Gene3D" id="3.90.1150.10">
    <property type="entry name" value="Aspartate Aminotransferase, domain 1"/>
    <property type="match status" value="1"/>
</dbReference>
<dbReference type="Gene3D" id="3.40.640.10">
    <property type="entry name" value="Type I PLP-dependent aspartate aminotransferase-like (Major domain)"/>
    <property type="match status" value="1"/>
</dbReference>
<dbReference type="HAMAP" id="MF_00713">
    <property type="entry name" value="GcvPB"/>
    <property type="match status" value="1"/>
</dbReference>
<dbReference type="InterPro" id="IPR023012">
    <property type="entry name" value="GcvPB"/>
</dbReference>
<dbReference type="InterPro" id="IPR049316">
    <property type="entry name" value="GDC-P_C"/>
</dbReference>
<dbReference type="InterPro" id="IPR049315">
    <property type="entry name" value="GDC-P_N"/>
</dbReference>
<dbReference type="InterPro" id="IPR020581">
    <property type="entry name" value="GDC_P"/>
</dbReference>
<dbReference type="InterPro" id="IPR015424">
    <property type="entry name" value="PyrdxlP-dep_Trfase"/>
</dbReference>
<dbReference type="InterPro" id="IPR015421">
    <property type="entry name" value="PyrdxlP-dep_Trfase_major"/>
</dbReference>
<dbReference type="InterPro" id="IPR015422">
    <property type="entry name" value="PyrdxlP-dep_Trfase_small"/>
</dbReference>
<dbReference type="NCBIfam" id="NF003346">
    <property type="entry name" value="PRK04366.1"/>
    <property type="match status" value="1"/>
</dbReference>
<dbReference type="PANTHER" id="PTHR11773:SF1">
    <property type="entry name" value="GLYCINE DEHYDROGENASE (DECARBOXYLATING), MITOCHONDRIAL"/>
    <property type="match status" value="1"/>
</dbReference>
<dbReference type="PANTHER" id="PTHR11773">
    <property type="entry name" value="GLYCINE DEHYDROGENASE, DECARBOXYLATING"/>
    <property type="match status" value="1"/>
</dbReference>
<dbReference type="Pfam" id="PF21478">
    <property type="entry name" value="GcvP2_C"/>
    <property type="match status" value="1"/>
</dbReference>
<dbReference type="Pfam" id="PF02347">
    <property type="entry name" value="GDC-P"/>
    <property type="match status" value="1"/>
</dbReference>
<dbReference type="SUPFAM" id="SSF53383">
    <property type="entry name" value="PLP-dependent transferases"/>
    <property type="match status" value="1"/>
</dbReference>
<evidence type="ECO:0000255" key="1">
    <source>
        <dbReference type="HAMAP-Rule" id="MF_00713"/>
    </source>
</evidence>
<gene>
    <name evidence="1" type="primary">gcvPB</name>
    <name type="ordered locus">BCAH820_4245</name>
</gene>
<accession>B7JMU9</accession>
<reference key="1">
    <citation type="submission" date="2008-10" db="EMBL/GenBank/DDBJ databases">
        <title>Genome sequence of Bacillus cereus AH820.</title>
        <authorList>
            <person name="Dodson R.J."/>
            <person name="Durkin A.S."/>
            <person name="Rosovitz M.J."/>
            <person name="Rasko D.A."/>
            <person name="Hoffmaster A."/>
            <person name="Ravel J."/>
            <person name="Sutton G."/>
        </authorList>
    </citation>
    <scope>NUCLEOTIDE SEQUENCE [LARGE SCALE GENOMIC DNA]</scope>
    <source>
        <strain>AH820</strain>
    </source>
</reference>
<protein>
    <recommendedName>
        <fullName evidence="1">Probable glycine dehydrogenase (decarboxylating) subunit 2</fullName>
        <ecNumber evidence="1">1.4.4.2</ecNumber>
    </recommendedName>
    <alternativeName>
        <fullName evidence="1">Glycine cleavage system P-protein subunit 2</fullName>
    </alternativeName>
    <alternativeName>
        <fullName evidence="1">Glycine decarboxylase subunit 2</fullName>
    </alternativeName>
    <alternativeName>
        <fullName evidence="1">Glycine dehydrogenase (aminomethyl-transferring) subunit 2</fullName>
    </alternativeName>
</protein>
<name>GCSPB_BACC0</name>
<sequence length="491" mass="54865">MKNQDQALIFEVSKEGRIGYSLPKLDVEEVKLEDVFESDYIRVEDAELPEVSELDIMRHYTALSNRNHGVDSGFYPLGSCTMKYNPKINESVARFAGFANIHPLQDEKTVQGAMELMYDLQEHLIEITGMDTVTLQPAAGAHGEWTGLMLIRAYHEANGDFNRTKVIVPDSAHGTNPASATVAGFETITVKSNEHGLVDLEDLKRVVNEETAALMLTNPNTLGLFEENILEMAEIVHNAGGKLYYDGANLNAVLSQARPGDMGFDVVHLNLHKTFTGPHGGGGPGSGPVGVKADLIPYLPKPILEKTENGYHFNYDRPEAIGRVKPFYGNFGINVRAYTYIRSMGPDGLRAVTEYAVLNANYMMRRLAPFYDLPFDRHCKHEFVLSGRRQKKLGVRTLDIAKRLLDFGYHPPTIYFPLNVEECIMIEPTETESKETLDGFIDKMIQIAKEVEENPEVVQEAPHTTVIKRLDETMAARKPVLRYAKPAPVQV</sequence>
<proteinExistence type="inferred from homology"/>
<feature type="chain" id="PRO_1000132491" description="Probable glycine dehydrogenase (decarboxylating) subunit 2">
    <location>
        <begin position="1"/>
        <end position="491"/>
    </location>
</feature>
<feature type="modified residue" description="N6-(pyridoxal phosphate)lysine" evidence="1">
    <location>
        <position position="273"/>
    </location>
</feature>
<comment type="function">
    <text evidence="1">The glycine cleavage system catalyzes the degradation of glycine. The P protein binds the alpha-amino group of glycine through its pyridoxal phosphate cofactor; CO(2) is released and the remaining methylamine moiety is then transferred to the lipoamide cofactor of the H protein.</text>
</comment>
<comment type="catalytic activity">
    <reaction evidence="1">
        <text>N(6)-[(R)-lipoyl]-L-lysyl-[glycine-cleavage complex H protein] + glycine + H(+) = N(6)-[(R)-S(8)-aminomethyldihydrolipoyl]-L-lysyl-[glycine-cleavage complex H protein] + CO2</text>
        <dbReference type="Rhea" id="RHEA:24304"/>
        <dbReference type="Rhea" id="RHEA-COMP:10494"/>
        <dbReference type="Rhea" id="RHEA-COMP:10495"/>
        <dbReference type="ChEBI" id="CHEBI:15378"/>
        <dbReference type="ChEBI" id="CHEBI:16526"/>
        <dbReference type="ChEBI" id="CHEBI:57305"/>
        <dbReference type="ChEBI" id="CHEBI:83099"/>
        <dbReference type="ChEBI" id="CHEBI:83143"/>
        <dbReference type="EC" id="1.4.4.2"/>
    </reaction>
</comment>
<comment type="cofactor">
    <cofactor evidence="1">
        <name>pyridoxal 5'-phosphate</name>
        <dbReference type="ChEBI" id="CHEBI:597326"/>
    </cofactor>
</comment>
<comment type="subunit">
    <text evidence="1">The glycine cleavage system is composed of four proteins: P, T, L and H. In this organism, the P 'protein' is a heterodimer of two subunits.</text>
</comment>
<comment type="similarity">
    <text evidence="1">Belongs to the GcvP family. C-terminal subunit subfamily.</text>
</comment>